<sequence>MKLILTADVDHLGSVGDTVEVKDGYGRNFLLPHGLAIVASRGAQRQADEIRRARETKAMRDREHANEIKVAIEALGSVSLPMKTVADSGKLFGSVTAGDVVAAIKKAGGPNLDKRIVRLPKTHIKAVGTHPVSVHLHPEVDVVVLLDVVAAR</sequence>
<comment type="function">
    <text evidence="1">Binds to the 23S rRNA.</text>
</comment>
<comment type="similarity">
    <text evidence="1">Belongs to the bacterial ribosomal protein bL9 family.</text>
</comment>
<proteinExistence type="inferred from homology"/>
<keyword id="KW-1185">Reference proteome</keyword>
<keyword id="KW-0687">Ribonucleoprotein</keyword>
<keyword id="KW-0689">Ribosomal protein</keyword>
<keyword id="KW-0694">RNA-binding</keyword>
<keyword id="KW-0699">rRNA-binding</keyword>
<evidence type="ECO:0000255" key="1">
    <source>
        <dbReference type="HAMAP-Rule" id="MF_00503"/>
    </source>
</evidence>
<evidence type="ECO:0000305" key="2"/>
<gene>
    <name evidence="1" type="primary">rplI</name>
    <name type="ordered locus">ML2682</name>
    <name type="ORF">MLCB1913.18c</name>
</gene>
<dbReference type="EMBL" id="L39923">
    <property type="protein sequence ID" value="AAB53119.1"/>
    <property type="molecule type" value="Genomic_DNA"/>
</dbReference>
<dbReference type="EMBL" id="AL022118">
    <property type="protein sequence ID" value="CAA17951.1"/>
    <property type="molecule type" value="Genomic_DNA"/>
</dbReference>
<dbReference type="EMBL" id="AL583926">
    <property type="protein sequence ID" value="CAC32214.1"/>
    <property type="molecule type" value="Genomic_DNA"/>
</dbReference>
<dbReference type="PIR" id="H87244">
    <property type="entry name" value="H87244"/>
</dbReference>
<dbReference type="RefSeq" id="NP_302710.1">
    <property type="nucleotide sequence ID" value="NC_002677.1"/>
</dbReference>
<dbReference type="RefSeq" id="WP_010909029.1">
    <property type="nucleotide sequence ID" value="NC_002677.1"/>
</dbReference>
<dbReference type="SMR" id="P46385"/>
<dbReference type="STRING" id="272631.gene:17576548"/>
<dbReference type="KEGG" id="mle:ML2682"/>
<dbReference type="PATRIC" id="fig|272631.5.peg.5174"/>
<dbReference type="Leproma" id="ML2682"/>
<dbReference type="eggNOG" id="COG0359">
    <property type="taxonomic scope" value="Bacteria"/>
</dbReference>
<dbReference type="HOGENOM" id="CLU_078938_5_1_11"/>
<dbReference type="OrthoDB" id="9788336at2"/>
<dbReference type="Proteomes" id="UP000000806">
    <property type="component" value="Chromosome"/>
</dbReference>
<dbReference type="GO" id="GO:1990904">
    <property type="term" value="C:ribonucleoprotein complex"/>
    <property type="evidence" value="ECO:0007669"/>
    <property type="project" value="UniProtKB-KW"/>
</dbReference>
<dbReference type="GO" id="GO:0005840">
    <property type="term" value="C:ribosome"/>
    <property type="evidence" value="ECO:0007669"/>
    <property type="project" value="UniProtKB-KW"/>
</dbReference>
<dbReference type="GO" id="GO:0019843">
    <property type="term" value="F:rRNA binding"/>
    <property type="evidence" value="ECO:0007669"/>
    <property type="project" value="UniProtKB-UniRule"/>
</dbReference>
<dbReference type="GO" id="GO:0003735">
    <property type="term" value="F:structural constituent of ribosome"/>
    <property type="evidence" value="ECO:0007669"/>
    <property type="project" value="InterPro"/>
</dbReference>
<dbReference type="GO" id="GO:0006412">
    <property type="term" value="P:translation"/>
    <property type="evidence" value="ECO:0007669"/>
    <property type="project" value="UniProtKB-UniRule"/>
</dbReference>
<dbReference type="FunFam" id="3.40.5.10:FF:000003">
    <property type="entry name" value="50S ribosomal protein L9"/>
    <property type="match status" value="1"/>
</dbReference>
<dbReference type="Gene3D" id="3.10.430.100">
    <property type="entry name" value="Ribosomal protein L9, C-terminal domain"/>
    <property type="match status" value="1"/>
</dbReference>
<dbReference type="Gene3D" id="3.40.5.10">
    <property type="entry name" value="Ribosomal protein L9, N-terminal domain"/>
    <property type="match status" value="1"/>
</dbReference>
<dbReference type="HAMAP" id="MF_00503">
    <property type="entry name" value="Ribosomal_bL9"/>
    <property type="match status" value="1"/>
</dbReference>
<dbReference type="InterPro" id="IPR000244">
    <property type="entry name" value="Ribosomal_bL9"/>
</dbReference>
<dbReference type="InterPro" id="IPR009027">
    <property type="entry name" value="Ribosomal_bL9/RNase_H1_N"/>
</dbReference>
<dbReference type="InterPro" id="IPR020594">
    <property type="entry name" value="Ribosomal_bL9_bac/chp"/>
</dbReference>
<dbReference type="InterPro" id="IPR020069">
    <property type="entry name" value="Ribosomal_bL9_C"/>
</dbReference>
<dbReference type="InterPro" id="IPR036791">
    <property type="entry name" value="Ribosomal_bL9_C_sf"/>
</dbReference>
<dbReference type="InterPro" id="IPR020070">
    <property type="entry name" value="Ribosomal_bL9_N"/>
</dbReference>
<dbReference type="InterPro" id="IPR036935">
    <property type="entry name" value="Ribosomal_bL9_N_sf"/>
</dbReference>
<dbReference type="NCBIfam" id="TIGR00158">
    <property type="entry name" value="L9"/>
    <property type="match status" value="1"/>
</dbReference>
<dbReference type="PANTHER" id="PTHR21368">
    <property type="entry name" value="50S RIBOSOMAL PROTEIN L9"/>
    <property type="match status" value="1"/>
</dbReference>
<dbReference type="Pfam" id="PF03948">
    <property type="entry name" value="Ribosomal_L9_C"/>
    <property type="match status" value="1"/>
</dbReference>
<dbReference type="Pfam" id="PF01281">
    <property type="entry name" value="Ribosomal_L9_N"/>
    <property type="match status" value="1"/>
</dbReference>
<dbReference type="SUPFAM" id="SSF55658">
    <property type="entry name" value="L9 N-domain-like"/>
    <property type="match status" value="1"/>
</dbReference>
<dbReference type="SUPFAM" id="SSF55653">
    <property type="entry name" value="Ribosomal protein L9 C-domain"/>
    <property type="match status" value="1"/>
</dbReference>
<dbReference type="PROSITE" id="PS00651">
    <property type="entry name" value="RIBOSOMAL_L9"/>
    <property type="match status" value="1"/>
</dbReference>
<accession>P46385</accession>
<feature type="chain" id="PRO_0000176652" description="Large ribosomal subunit protein bL9">
    <location>
        <begin position="1"/>
        <end position="152"/>
    </location>
</feature>
<protein>
    <recommendedName>
        <fullName evidence="1">Large ribosomal subunit protein bL9</fullName>
    </recommendedName>
    <alternativeName>
        <fullName evidence="2">50S ribosomal protein L9</fullName>
    </alternativeName>
</protein>
<name>RL9_MYCLE</name>
<reference key="1">
    <citation type="journal article" date="1996" name="Microbiology">
        <title>Gene arrangement and organization in an approximately 76 kb fragment encompassing the oriC region of the chromosome of Mycobacterium leprae.</title>
        <authorList>
            <person name="Fsihi H."/>
            <person name="de Rossi E."/>
            <person name="Salazar L."/>
            <person name="Cantoni R."/>
            <person name="Labo M."/>
            <person name="Riccardi G."/>
            <person name="Takiff H.E."/>
            <person name="Eiglmeier K."/>
            <person name="Bergh S."/>
            <person name="Cole S.T."/>
        </authorList>
    </citation>
    <scope>NUCLEOTIDE SEQUENCE [GENOMIC DNA]</scope>
</reference>
<reference key="2">
    <citation type="journal article" date="2001" name="Nature">
        <title>Massive gene decay in the leprosy bacillus.</title>
        <authorList>
            <person name="Cole S.T."/>
            <person name="Eiglmeier K."/>
            <person name="Parkhill J."/>
            <person name="James K.D."/>
            <person name="Thomson N.R."/>
            <person name="Wheeler P.R."/>
            <person name="Honore N."/>
            <person name="Garnier T."/>
            <person name="Churcher C.M."/>
            <person name="Harris D.E."/>
            <person name="Mungall K.L."/>
            <person name="Basham D."/>
            <person name="Brown D."/>
            <person name="Chillingworth T."/>
            <person name="Connor R."/>
            <person name="Davies R.M."/>
            <person name="Devlin K."/>
            <person name="Duthoy S."/>
            <person name="Feltwell T."/>
            <person name="Fraser A."/>
            <person name="Hamlin N."/>
            <person name="Holroyd S."/>
            <person name="Hornsby T."/>
            <person name="Jagels K."/>
            <person name="Lacroix C."/>
            <person name="Maclean J."/>
            <person name="Moule S."/>
            <person name="Murphy L.D."/>
            <person name="Oliver K."/>
            <person name="Quail M.A."/>
            <person name="Rajandream M.A."/>
            <person name="Rutherford K.M."/>
            <person name="Rutter S."/>
            <person name="Seeger K."/>
            <person name="Simon S."/>
            <person name="Simmonds M."/>
            <person name="Skelton J."/>
            <person name="Squares R."/>
            <person name="Squares S."/>
            <person name="Stevens K."/>
            <person name="Taylor K."/>
            <person name="Whitehead S."/>
            <person name="Woodward J.R."/>
            <person name="Barrell B.G."/>
        </authorList>
    </citation>
    <scope>NUCLEOTIDE SEQUENCE [LARGE SCALE GENOMIC DNA]</scope>
    <source>
        <strain>TN</strain>
    </source>
</reference>
<organism>
    <name type="scientific">Mycobacterium leprae (strain TN)</name>
    <dbReference type="NCBI Taxonomy" id="272631"/>
    <lineage>
        <taxon>Bacteria</taxon>
        <taxon>Bacillati</taxon>
        <taxon>Actinomycetota</taxon>
        <taxon>Actinomycetes</taxon>
        <taxon>Mycobacteriales</taxon>
        <taxon>Mycobacteriaceae</taxon>
        <taxon>Mycobacterium</taxon>
    </lineage>
</organism>